<dbReference type="EC" id="3.1.1.29" evidence="1"/>
<dbReference type="EMBL" id="CP000813">
    <property type="protein sequence ID" value="ABV60737.1"/>
    <property type="molecule type" value="Genomic_DNA"/>
</dbReference>
<dbReference type="RefSeq" id="WP_012008658.1">
    <property type="nucleotide sequence ID" value="NZ_VEIS01000022.1"/>
</dbReference>
<dbReference type="SMR" id="A8F920"/>
<dbReference type="STRING" id="315750.BPUM_0037"/>
<dbReference type="GeneID" id="5619274"/>
<dbReference type="KEGG" id="bpu:BPUM_0037"/>
<dbReference type="eggNOG" id="COG0193">
    <property type="taxonomic scope" value="Bacteria"/>
</dbReference>
<dbReference type="HOGENOM" id="CLU_062456_4_1_9"/>
<dbReference type="OrthoDB" id="9800507at2"/>
<dbReference type="Proteomes" id="UP000001355">
    <property type="component" value="Chromosome"/>
</dbReference>
<dbReference type="GO" id="GO:0005737">
    <property type="term" value="C:cytoplasm"/>
    <property type="evidence" value="ECO:0007669"/>
    <property type="project" value="UniProtKB-SubCell"/>
</dbReference>
<dbReference type="GO" id="GO:0004045">
    <property type="term" value="F:peptidyl-tRNA hydrolase activity"/>
    <property type="evidence" value="ECO:0007669"/>
    <property type="project" value="UniProtKB-UniRule"/>
</dbReference>
<dbReference type="GO" id="GO:0000049">
    <property type="term" value="F:tRNA binding"/>
    <property type="evidence" value="ECO:0007669"/>
    <property type="project" value="UniProtKB-UniRule"/>
</dbReference>
<dbReference type="GO" id="GO:0006515">
    <property type="term" value="P:protein quality control for misfolded or incompletely synthesized proteins"/>
    <property type="evidence" value="ECO:0007669"/>
    <property type="project" value="UniProtKB-UniRule"/>
</dbReference>
<dbReference type="GO" id="GO:0072344">
    <property type="term" value="P:rescue of stalled ribosome"/>
    <property type="evidence" value="ECO:0007669"/>
    <property type="project" value="UniProtKB-UniRule"/>
</dbReference>
<dbReference type="CDD" id="cd00462">
    <property type="entry name" value="PTH"/>
    <property type="match status" value="1"/>
</dbReference>
<dbReference type="FunFam" id="3.40.50.1470:FF:000001">
    <property type="entry name" value="Peptidyl-tRNA hydrolase"/>
    <property type="match status" value="1"/>
</dbReference>
<dbReference type="Gene3D" id="3.40.50.1470">
    <property type="entry name" value="Peptidyl-tRNA hydrolase"/>
    <property type="match status" value="1"/>
</dbReference>
<dbReference type="HAMAP" id="MF_00083">
    <property type="entry name" value="Pept_tRNA_hydro_bact"/>
    <property type="match status" value="1"/>
</dbReference>
<dbReference type="InterPro" id="IPR001328">
    <property type="entry name" value="Pept_tRNA_hydro"/>
</dbReference>
<dbReference type="InterPro" id="IPR018171">
    <property type="entry name" value="Pept_tRNA_hydro_CS"/>
</dbReference>
<dbReference type="InterPro" id="IPR036416">
    <property type="entry name" value="Pept_tRNA_hydro_sf"/>
</dbReference>
<dbReference type="NCBIfam" id="TIGR00447">
    <property type="entry name" value="pth"/>
    <property type="match status" value="1"/>
</dbReference>
<dbReference type="PANTHER" id="PTHR17224">
    <property type="entry name" value="PEPTIDYL-TRNA HYDROLASE"/>
    <property type="match status" value="1"/>
</dbReference>
<dbReference type="PANTHER" id="PTHR17224:SF1">
    <property type="entry name" value="PEPTIDYL-TRNA HYDROLASE"/>
    <property type="match status" value="1"/>
</dbReference>
<dbReference type="Pfam" id="PF01195">
    <property type="entry name" value="Pept_tRNA_hydro"/>
    <property type="match status" value="1"/>
</dbReference>
<dbReference type="SUPFAM" id="SSF53178">
    <property type="entry name" value="Peptidyl-tRNA hydrolase-like"/>
    <property type="match status" value="1"/>
</dbReference>
<dbReference type="PROSITE" id="PS01195">
    <property type="entry name" value="PEPT_TRNA_HYDROL_1"/>
    <property type="match status" value="1"/>
</dbReference>
<dbReference type="PROSITE" id="PS01196">
    <property type="entry name" value="PEPT_TRNA_HYDROL_2"/>
    <property type="match status" value="1"/>
</dbReference>
<sequence length="188" mass="21045">MIAFVGLGNPGKEYEKTRHNVGFMTIDELSKKWDIPLNQSKFHGQFGTGFVSGQKVLLVKPLTYMNLSGECVRPLMDYYDIPLEHLKVIYDDLDLPTGRIRLRTKGSAGGHNGIKSLIQHLGSPEFDRFRIGIGRPQNGMKVVDYVLGRFSEEEQPDIASAIQASVEACEAALTKPFLEVMNDFNKKV</sequence>
<evidence type="ECO:0000255" key="1">
    <source>
        <dbReference type="HAMAP-Rule" id="MF_00083"/>
    </source>
</evidence>
<reference key="1">
    <citation type="journal article" date="2007" name="PLoS ONE">
        <title>Paradoxical DNA repair and peroxide resistance gene conservation in Bacillus pumilus SAFR-032.</title>
        <authorList>
            <person name="Gioia J."/>
            <person name="Yerrapragada S."/>
            <person name="Qin X."/>
            <person name="Jiang H."/>
            <person name="Igboeli O.C."/>
            <person name="Muzny D."/>
            <person name="Dugan-Rocha S."/>
            <person name="Ding Y."/>
            <person name="Hawes A."/>
            <person name="Liu W."/>
            <person name="Perez L."/>
            <person name="Kovar C."/>
            <person name="Dinh H."/>
            <person name="Lee S."/>
            <person name="Nazareth L."/>
            <person name="Blyth P."/>
            <person name="Holder M."/>
            <person name="Buhay C."/>
            <person name="Tirumalai M.R."/>
            <person name="Liu Y."/>
            <person name="Dasgupta I."/>
            <person name="Bokhetache L."/>
            <person name="Fujita M."/>
            <person name="Karouia F."/>
            <person name="Eswara Moorthy P."/>
            <person name="Siefert J."/>
            <person name="Uzman A."/>
            <person name="Buzumbo P."/>
            <person name="Verma A."/>
            <person name="Zwiya H."/>
            <person name="McWilliams B.D."/>
            <person name="Olowu A."/>
            <person name="Clinkenbeard K.D."/>
            <person name="Newcombe D."/>
            <person name="Golebiewski L."/>
            <person name="Petrosino J.F."/>
            <person name="Nicholson W.L."/>
            <person name="Fox G.E."/>
            <person name="Venkateswaran K."/>
            <person name="Highlander S.K."/>
            <person name="Weinstock G.M."/>
        </authorList>
    </citation>
    <scope>NUCLEOTIDE SEQUENCE [LARGE SCALE GENOMIC DNA]</scope>
    <source>
        <strain>SAFR-032</strain>
    </source>
</reference>
<keyword id="KW-0963">Cytoplasm</keyword>
<keyword id="KW-0378">Hydrolase</keyword>
<keyword id="KW-0694">RNA-binding</keyword>
<keyword id="KW-0820">tRNA-binding</keyword>
<comment type="function">
    <text evidence="1">Hydrolyzes ribosome-free peptidyl-tRNAs (with 1 or more amino acids incorporated), which drop off the ribosome during protein synthesis, or as a result of ribosome stalling.</text>
</comment>
<comment type="function">
    <text evidence="1">Catalyzes the release of premature peptidyl moieties from peptidyl-tRNA molecules trapped in stalled 50S ribosomal subunits, and thus maintains levels of free tRNAs and 50S ribosomes.</text>
</comment>
<comment type="catalytic activity">
    <reaction evidence="1">
        <text>an N-acyl-L-alpha-aminoacyl-tRNA + H2O = an N-acyl-L-amino acid + a tRNA + H(+)</text>
        <dbReference type="Rhea" id="RHEA:54448"/>
        <dbReference type="Rhea" id="RHEA-COMP:10123"/>
        <dbReference type="Rhea" id="RHEA-COMP:13883"/>
        <dbReference type="ChEBI" id="CHEBI:15377"/>
        <dbReference type="ChEBI" id="CHEBI:15378"/>
        <dbReference type="ChEBI" id="CHEBI:59874"/>
        <dbReference type="ChEBI" id="CHEBI:78442"/>
        <dbReference type="ChEBI" id="CHEBI:138191"/>
        <dbReference type="EC" id="3.1.1.29"/>
    </reaction>
</comment>
<comment type="subunit">
    <text evidence="1">Monomer.</text>
</comment>
<comment type="subcellular location">
    <subcellularLocation>
        <location evidence="1">Cytoplasm</location>
    </subcellularLocation>
</comment>
<comment type="similarity">
    <text evidence="1">Belongs to the PTH family.</text>
</comment>
<organism>
    <name type="scientific">Bacillus pumilus (strain SAFR-032)</name>
    <dbReference type="NCBI Taxonomy" id="315750"/>
    <lineage>
        <taxon>Bacteria</taxon>
        <taxon>Bacillati</taxon>
        <taxon>Bacillota</taxon>
        <taxon>Bacilli</taxon>
        <taxon>Bacillales</taxon>
        <taxon>Bacillaceae</taxon>
        <taxon>Bacillus</taxon>
    </lineage>
</organism>
<accession>A8F920</accession>
<proteinExistence type="inferred from homology"/>
<protein>
    <recommendedName>
        <fullName evidence="1">Peptidyl-tRNA hydrolase</fullName>
        <shortName evidence="1">Pth</shortName>
        <ecNumber evidence="1">3.1.1.29</ecNumber>
    </recommendedName>
</protein>
<feature type="chain" id="PRO_1000057547" description="Peptidyl-tRNA hydrolase">
    <location>
        <begin position="1"/>
        <end position="188"/>
    </location>
</feature>
<feature type="active site" description="Proton acceptor" evidence="1">
    <location>
        <position position="19"/>
    </location>
</feature>
<feature type="binding site" evidence="1">
    <location>
        <position position="14"/>
    </location>
    <ligand>
        <name>tRNA</name>
        <dbReference type="ChEBI" id="CHEBI:17843"/>
    </ligand>
</feature>
<feature type="binding site" evidence="1">
    <location>
        <position position="64"/>
    </location>
    <ligand>
        <name>tRNA</name>
        <dbReference type="ChEBI" id="CHEBI:17843"/>
    </ligand>
</feature>
<feature type="binding site" evidence="1">
    <location>
        <position position="66"/>
    </location>
    <ligand>
        <name>tRNA</name>
        <dbReference type="ChEBI" id="CHEBI:17843"/>
    </ligand>
</feature>
<feature type="binding site" evidence="1">
    <location>
        <position position="112"/>
    </location>
    <ligand>
        <name>tRNA</name>
        <dbReference type="ChEBI" id="CHEBI:17843"/>
    </ligand>
</feature>
<feature type="site" description="Discriminates between blocked and unblocked aminoacyl-tRNA" evidence="1">
    <location>
        <position position="9"/>
    </location>
</feature>
<feature type="site" description="Stabilizes the basic form of H active site to accept a proton" evidence="1">
    <location>
        <position position="91"/>
    </location>
</feature>
<gene>
    <name evidence="1" type="primary">pth</name>
    <name type="ordered locus">BPUM_0037</name>
</gene>
<name>PTH_BACP2</name>